<feature type="chain" id="PRO_0000188165" description="ATP synthase epsilon chain">
    <location>
        <begin position="1"/>
        <end position="141"/>
    </location>
</feature>
<sequence>MQLQLIITTPNGIFFNEKVDIVTVVTAGGHIGIQYGHQPLISTIEISELHINTEGHKDYRICSINGGLLYVEKDKANIITGAIEFKEDIDIEKARREHDYLVEILSNSKNKDSDYFRNELKLKKVINRLKISSNSTQSPKK</sequence>
<accession>Q98QU6</accession>
<dbReference type="EMBL" id="AL445563">
    <property type="protein sequence ID" value="CAC13438.1"/>
    <property type="molecule type" value="Genomic_DNA"/>
</dbReference>
<dbReference type="PIR" id="A90545">
    <property type="entry name" value="A90545"/>
</dbReference>
<dbReference type="RefSeq" id="WP_010925069.1">
    <property type="nucleotide sequence ID" value="NC_002771.1"/>
</dbReference>
<dbReference type="SMR" id="Q98QU6"/>
<dbReference type="STRING" id="272635.gene:17576855"/>
<dbReference type="KEGG" id="mpu:MYPU_2650"/>
<dbReference type="eggNOG" id="COG0355">
    <property type="taxonomic scope" value="Bacteria"/>
</dbReference>
<dbReference type="HOGENOM" id="CLU_084338_1_3_14"/>
<dbReference type="BioCyc" id="MPUL272635:G1GT6-266-MONOMER"/>
<dbReference type="Proteomes" id="UP000000528">
    <property type="component" value="Chromosome"/>
</dbReference>
<dbReference type="GO" id="GO:0005886">
    <property type="term" value="C:plasma membrane"/>
    <property type="evidence" value="ECO:0007669"/>
    <property type="project" value="UniProtKB-SubCell"/>
</dbReference>
<dbReference type="GO" id="GO:0045259">
    <property type="term" value="C:proton-transporting ATP synthase complex"/>
    <property type="evidence" value="ECO:0007669"/>
    <property type="project" value="UniProtKB-KW"/>
</dbReference>
<dbReference type="GO" id="GO:0005524">
    <property type="term" value="F:ATP binding"/>
    <property type="evidence" value="ECO:0007669"/>
    <property type="project" value="UniProtKB-UniRule"/>
</dbReference>
<dbReference type="GO" id="GO:0046933">
    <property type="term" value="F:proton-transporting ATP synthase activity, rotational mechanism"/>
    <property type="evidence" value="ECO:0007669"/>
    <property type="project" value="UniProtKB-UniRule"/>
</dbReference>
<dbReference type="CDD" id="cd12152">
    <property type="entry name" value="F1-ATPase_delta"/>
    <property type="match status" value="1"/>
</dbReference>
<dbReference type="Gene3D" id="2.60.15.10">
    <property type="entry name" value="F0F1 ATP synthase delta/epsilon subunit, N-terminal"/>
    <property type="match status" value="1"/>
</dbReference>
<dbReference type="HAMAP" id="MF_00530">
    <property type="entry name" value="ATP_synth_epsil_bac"/>
    <property type="match status" value="1"/>
</dbReference>
<dbReference type="InterPro" id="IPR001469">
    <property type="entry name" value="ATP_synth_F1_dsu/esu"/>
</dbReference>
<dbReference type="InterPro" id="IPR020546">
    <property type="entry name" value="ATP_synth_F1_dsu/esu_N"/>
</dbReference>
<dbReference type="InterPro" id="IPR036771">
    <property type="entry name" value="ATPsynth_dsu/esu_N"/>
</dbReference>
<dbReference type="NCBIfam" id="TIGR01216">
    <property type="entry name" value="ATP_synt_epsi"/>
    <property type="match status" value="1"/>
</dbReference>
<dbReference type="Pfam" id="PF02823">
    <property type="entry name" value="ATP-synt_DE_N"/>
    <property type="match status" value="1"/>
</dbReference>
<dbReference type="SUPFAM" id="SSF51344">
    <property type="entry name" value="Epsilon subunit of F1F0-ATP synthase N-terminal domain"/>
    <property type="match status" value="1"/>
</dbReference>
<comment type="function">
    <text evidence="1">Produces ATP from ADP in the presence of a proton gradient across the membrane.</text>
</comment>
<comment type="subunit">
    <text>F-type ATPases have 2 components, CF(1) - the catalytic core - and CF(0) - the membrane proton channel. CF(1) has five subunits: alpha(3), beta(3), gamma(1), delta(1), epsilon(1). CF(0) has three main subunits: a, b and c.</text>
</comment>
<comment type="subcellular location">
    <subcellularLocation>
        <location evidence="1">Cell membrane</location>
        <topology evidence="1">Peripheral membrane protein</topology>
    </subcellularLocation>
</comment>
<comment type="similarity">
    <text evidence="2">Belongs to the ATPase epsilon chain family.</text>
</comment>
<reference key="1">
    <citation type="journal article" date="2001" name="Nucleic Acids Res.">
        <title>The complete genome sequence of the murine respiratory pathogen Mycoplasma pulmonis.</title>
        <authorList>
            <person name="Chambaud I."/>
            <person name="Heilig R."/>
            <person name="Ferris S."/>
            <person name="Barbe V."/>
            <person name="Samson D."/>
            <person name="Galisson F."/>
            <person name="Moszer I."/>
            <person name="Dybvig K."/>
            <person name="Wroblewski H."/>
            <person name="Viari A."/>
            <person name="Rocha E.P.C."/>
            <person name="Blanchard A."/>
        </authorList>
    </citation>
    <scope>NUCLEOTIDE SEQUENCE [LARGE SCALE GENOMIC DNA]</scope>
    <source>
        <strain>UAB CTIP</strain>
    </source>
</reference>
<name>ATPE_MYCPU</name>
<organism>
    <name type="scientific">Mycoplasmopsis pulmonis (strain UAB CTIP)</name>
    <name type="common">Mycoplasma pulmonis</name>
    <dbReference type="NCBI Taxonomy" id="272635"/>
    <lineage>
        <taxon>Bacteria</taxon>
        <taxon>Bacillati</taxon>
        <taxon>Mycoplasmatota</taxon>
        <taxon>Mycoplasmoidales</taxon>
        <taxon>Metamycoplasmataceae</taxon>
        <taxon>Mycoplasmopsis</taxon>
    </lineage>
</organism>
<proteinExistence type="inferred from homology"/>
<keyword id="KW-0066">ATP synthesis</keyword>
<keyword id="KW-1003">Cell membrane</keyword>
<keyword id="KW-0139">CF(1)</keyword>
<keyword id="KW-0375">Hydrogen ion transport</keyword>
<keyword id="KW-0406">Ion transport</keyword>
<keyword id="KW-0472">Membrane</keyword>
<keyword id="KW-1185">Reference proteome</keyword>
<keyword id="KW-0813">Transport</keyword>
<protein>
    <recommendedName>
        <fullName>ATP synthase epsilon chain</fullName>
    </recommendedName>
    <alternativeName>
        <fullName>ATP synthase F1 sector epsilon subunit</fullName>
    </alternativeName>
    <alternativeName>
        <fullName>F-ATPase epsilon subunit</fullName>
    </alternativeName>
</protein>
<gene>
    <name type="primary">atpC</name>
    <name type="ordered locus">MYPU_2650</name>
</gene>
<evidence type="ECO:0000250" key="1"/>
<evidence type="ECO:0000305" key="2"/>